<organism>
    <name type="scientific">Nautilia profundicola (strain ATCC BAA-1463 / DSM 18972 / AmH)</name>
    <dbReference type="NCBI Taxonomy" id="598659"/>
    <lineage>
        <taxon>Bacteria</taxon>
        <taxon>Pseudomonadati</taxon>
        <taxon>Campylobacterota</taxon>
        <taxon>Epsilonproteobacteria</taxon>
        <taxon>Nautiliales</taxon>
        <taxon>Nautiliaceae</taxon>
        <taxon>Nautilia</taxon>
    </lineage>
</organism>
<feature type="chain" id="PRO_1000203508" description="4-hydroxy-3-methylbut-2-en-1-yl diphosphate synthase (flavodoxin)">
    <location>
        <begin position="1"/>
        <end position="350"/>
    </location>
</feature>
<feature type="binding site" evidence="1">
    <location>
        <position position="263"/>
    </location>
    <ligand>
        <name>[4Fe-4S] cluster</name>
        <dbReference type="ChEBI" id="CHEBI:49883"/>
    </ligand>
</feature>
<feature type="binding site" evidence="1">
    <location>
        <position position="266"/>
    </location>
    <ligand>
        <name>[4Fe-4S] cluster</name>
        <dbReference type="ChEBI" id="CHEBI:49883"/>
    </ligand>
</feature>
<feature type="binding site" evidence="1">
    <location>
        <position position="298"/>
    </location>
    <ligand>
        <name>[4Fe-4S] cluster</name>
        <dbReference type="ChEBI" id="CHEBI:49883"/>
    </ligand>
</feature>
<feature type="binding site" evidence="1">
    <location>
        <position position="305"/>
    </location>
    <ligand>
        <name>[4Fe-4S] cluster</name>
        <dbReference type="ChEBI" id="CHEBI:49883"/>
    </ligand>
</feature>
<reference key="1">
    <citation type="journal article" date="2009" name="PLoS Genet.">
        <title>Adaptations to submarine hydrothermal environments exemplified by the genome of Nautilia profundicola.</title>
        <authorList>
            <person name="Campbell B.J."/>
            <person name="Smith J.L."/>
            <person name="Hanson T.E."/>
            <person name="Klotz M.G."/>
            <person name="Stein L.Y."/>
            <person name="Lee C.K."/>
            <person name="Wu D."/>
            <person name="Robinson J.M."/>
            <person name="Khouri H.M."/>
            <person name="Eisen J.A."/>
            <person name="Cary S.C."/>
        </authorList>
    </citation>
    <scope>NUCLEOTIDE SEQUENCE [LARGE SCALE GENOMIC DNA]</scope>
    <source>
        <strain>ATCC BAA-1463 / DSM 18972 / AmH</strain>
    </source>
</reference>
<protein>
    <recommendedName>
        <fullName evidence="1">4-hydroxy-3-methylbut-2-en-1-yl diphosphate synthase (flavodoxin)</fullName>
        <ecNumber evidence="1">1.17.7.3</ecNumber>
    </recommendedName>
    <alternativeName>
        <fullName evidence="1">1-hydroxy-2-methyl-2-(E)-butenyl 4-diphosphate synthase</fullName>
    </alternativeName>
</protein>
<name>ISPG_NAUPA</name>
<dbReference type="EC" id="1.17.7.3" evidence="1"/>
<dbReference type="EMBL" id="CP001279">
    <property type="protein sequence ID" value="ACM92907.1"/>
    <property type="molecule type" value="Genomic_DNA"/>
</dbReference>
<dbReference type="RefSeq" id="WP_015901959.1">
    <property type="nucleotide sequence ID" value="NC_012115.1"/>
</dbReference>
<dbReference type="SMR" id="B9LA27"/>
<dbReference type="STRING" id="598659.NAMH_1086"/>
<dbReference type="KEGG" id="nam:NAMH_1086"/>
<dbReference type="eggNOG" id="COG0821">
    <property type="taxonomic scope" value="Bacteria"/>
</dbReference>
<dbReference type="HOGENOM" id="CLU_042258_0_0_7"/>
<dbReference type="OrthoDB" id="9803214at2"/>
<dbReference type="UniPathway" id="UPA00056">
    <property type="reaction ID" value="UER00096"/>
</dbReference>
<dbReference type="Proteomes" id="UP000000448">
    <property type="component" value="Chromosome"/>
</dbReference>
<dbReference type="GO" id="GO:0051539">
    <property type="term" value="F:4 iron, 4 sulfur cluster binding"/>
    <property type="evidence" value="ECO:0007669"/>
    <property type="project" value="UniProtKB-UniRule"/>
</dbReference>
<dbReference type="GO" id="GO:0046429">
    <property type="term" value="F:4-hydroxy-3-methylbut-2-en-1-yl diphosphate synthase activity (ferredoxin)"/>
    <property type="evidence" value="ECO:0007669"/>
    <property type="project" value="UniProtKB-UniRule"/>
</dbReference>
<dbReference type="GO" id="GO:0141197">
    <property type="term" value="F:4-hydroxy-3-methylbut-2-enyl-diphosphate synthase activity (flavodoxin)"/>
    <property type="evidence" value="ECO:0007669"/>
    <property type="project" value="UniProtKB-EC"/>
</dbReference>
<dbReference type="GO" id="GO:0005506">
    <property type="term" value="F:iron ion binding"/>
    <property type="evidence" value="ECO:0007669"/>
    <property type="project" value="InterPro"/>
</dbReference>
<dbReference type="GO" id="GO:0019288">
    <property type="term" value="P:isopentenyl diphosphate biosynthetic process, methylerythritol 4-phosphate pathway"/>
    <property type="evidence" value="ECO:0007669"/>
    <property type="project" value="UniProtKB-UniRule"/>
</dbReference>
<dbReference type="GO" id="GO:0016114">
    <property type="term" value="P:terpenoid biosynthetic process"/>
    <property type="evidence" value="ECO:0007669"/>
    <property type="project" value="InterPro"/>
</dbReference>
<dbReference type="FunFam" id="3.20.20.20:FF:000001">
    <property type="entry name" value="4-hydroxy-3-methylbut-2-en-1-yl diphosphate synthase (flavodoxin)"/>
    <property type="match status" value="1"/>
</dbReference>
<dbReference type="Gene3D" id="3.20.20.20">
    <property type="entry name" value="Dihydropteroate synthase-like"/>
    <property type="match status" value="1"/>
</dbReference>
<dbReference type="Gene3D" id="3.30.413.10">
    <property type="entry name" value="Sulfite Reductase Hemoprotein, domain 1"/>
    <property type="match status" value="1"/>
</dbReference>
<dbReference type="HAMAP" id="MF_00159">
    <property type="entry name" value="IspG"/>
    <property type="match status" value="1"/>
</dbReference>
<dbReference type="InterPro" id="IPR011005">
    <property type="entry name" value="Dihydropteroate_synth-like_sf"/>
</dbReference>
<dbReference type="InterPro" id="IPR036849">
    <property type="entry name" value="Enolase-like_C_sf"/>
</dbReference>
<dbReference type="InterPro" id="IPR016425">
    <property type="entry name" value="IspG_bac"/>
</dbReference>
<dbReference type="InterPro" id="IPR004588">
    <property type="entry name" value="IspG_bac-typ"/>
</dbReference>
<dbReference type="InterPro" id="IPR045854">
    <property type="entry name" value="NO2/SO3_Rdtase_4Fe4S_sf"/>
</dbReference>
<dbReference type="NCBIfam" id="TIGR00612">
    <property type="entry name" value="ispG_gcpE"/>
    <property type="match status" value="1"/>
</dbReference>
<dbReference type="NCBIfam" id="NF001540">
    <property type="entry name" value="PRK00366.1"/>
    <property type="match status" value="1"/>
</dbReference>
<dbReference type="PANTHER" id="PTHR30454">
    <property type="entry name" value="4-HYDROXY-3-METHYLBUT-2-EN-1-YL DIPHOSPHATE SYNTHASE"/>
    <property type="match status" value="1"/>
</dbReference>
<dbReference type="PANTHER" id="PTHR30454:SF0">
    <property type="entry name" value="4-HYDROXY-3-METHYLBUT-2-EN-1-YL DIPHOSPHATE SYNTHASE (FERREDOXIN), CHLOROPLASTIC"/>
    <property type="match status" value="1"/>
</dbReference>
<dbReference type="Pfam" id="PF04551">
    <property type="entry name" value="GcpE"/>
    <property type="match status" value="1"/>
</dbReference>
<dbReference type="PIRSF" id="PIRSF004640">
    <property type="entry name" value="IspG"/>
    <property type="match status" value="1"/>
</dbReference>
<dbReference type="SUPFAM" id="SSF51604">
    <property type="entry name" value="Enolase C-terminal domain-like"/>
    <property type="match status" value="1"/>
</dbReference>
<dbReference type="SUPFAM" id="SSF56014">
    <property type="entry name" value="Nitrite and sulphite reductase 4Fe-4S domain-like"/>
    <property type="match status" value="1"/>
</dbReference>
<gene>
    <name evidence="1" type="primary">ispG</name>
    <name type="ordered locus">NAMH_1086</name>
</gene>
<keyword id="KW-0004">4Fe-4S</keyword>
<keyword id="KW-0408">Iron</keyword>
<keyword id="KW-0411">Iron-sulfur</keyword>
<keyword id="KW-0414">Isoprene biosynthesis</keyword>
<keyword id="KW-0479">Metal-binding</keyword>
<keyword id="KW-0560">Oxidoreductase</keyword>
<proteinExistence type="inferred from homology"/>
<accession>B9LA27</accession>
<comment type="function">
    <text evidence="1">Converts 2C-methyl-D-erythritol 2,4-cyclodiphosphate (ME-2,4cPP) into 1-hydroxy-2-methyl-2-(E)-butenyl 4-diphosphate.</text>
</comment>
<comment type="catalytic activity">
    <reaction evidence="1">
        <text>(2E)-4-hydroxy-3-methylbut-2-enyl diphosphate + oxidized [flavodoxin] + H2O + 2 H(+) = 2-C-methyl-D-erythritol 2,4-cyclic diphosphate + reduced [flavodoxin]</text>
        <dbReference type="Rhea" id="RHEA:43604"/>
        <dbReference type="Rhea" id="RHEA-COMP:10622"/>
        <dbReference type="Rhea" id="RHEA-COMP:10623"/>
        <dbReference type="ChEBI" id="CHEBI:15377"/>
        <dbReference type="ChEBI" id="CHEBI:15378"/>
        <dbReference type="ChEBI" id="CHEBI:57618"/>
        <dbReference type="ChEBI" id="CHEBI:58210"/>
        <dbReference type="ChEBI" id="CHEBI:58483"/>
        <dbReference type="ChEBI" id="CHEBI:128753"/>
        <dbReference type="EC" id="1.17.7.3"/>
    </reaction>
</comment>
<comment type="cofactor">
    <cofactor evidence="1">
        <name>[4Fe-4S] cluster</name>
        <dbReference type="ChEBI" id="CHEBI:49883"/>
    </cofactor>
    <text evidence="1">Binds 1 [4Fe-4S] cluster.</text>
</comment>
<comment type="pathway">
    <text evidence="1">Isoprenoid biosynthesis; isopentenyl diphosphate biosynthesis via DXP pathway; isopentenyl diphosphate from 1-deoxy-D-xylulose 5-phosphate: step 5/6.</text>
</comment>
<comment type="similarity">
    <text evidence="1">Belongs to the IspG family.</text>
</comment>
<evidence type="ECO:0000255" key="1">
    <source>
        <dbReference type="HAMAP-Rule" id="MF_00159"/>
    </source>
</evidence>
<sequence>MIKRYPTRKIKVGNVDVGGDAPISVQSMTYSKTKDIESTLDQINRLYFAGADIVRVAVLDEEDALALKEIKQKSPLPVIADIHFNYRLGLKAAEVVDGLRINPGNIGGKERVKAIVDACKARKIPIRIGVNAGSLEDHLENKYGQTPKAMVESALWHIKFLEDLDFFDIKVSLKASDVQRTVEAYRMLRPLVDYPFHLGVTEAGTKFHATIKSAAAFGALLLDGIGDTMRVSITGELEEEIKVGKAILKDLGLSKEGVNIISCPTCGRIEVDLPPIVEAVEEATKHIKKPLNLAVMGCVVNAIGEAKEADVAIACGKGYGLIIKKGEIIGKYKEEELLEKFLEEVKKESE</sequence>